<name>COAD_PROM3</name>
<gene>
    <name evidence="1" type="primary">coaD</name>
    <name type="ordered locus">P9303_14961</name>
</gene>
<dbReference type="EC" id="2.7.7.3" evidence="1"/>
<dbReference type="EMBL" id="CP000554">
    <property type="protein sequence ID" value="ABM78242.1"/>
    <property type="molecule type" value="Genomic_DNA"/>
</dbReference>
<dbReference type="RefSeq" id="WP_011826135.1">
    <property type="nucleotide sequence ID" value="NC_008820.1"/>
</dbReference>
<dbReference type="SMR" id="A2C9T2"/>
<dbReference type="STRING" id="59922.P9303_14961"/>
<dbReference type="KEGG" id="pmf:P9303_14961"/>
<dbReference type="HOGENOM" id="CLU_100149_1_1_3"/>
<dbReference type="BioCyc" id="PMAR59922:G1G80-1295-MONOMER"/>
<dbReference type="UniPathway" id="UPA00241">
    <property type="reaction ID" value="UER00355"/>
</dbReference>
<dbReference type="Proteomes" id="UP000002274">
    <property type="component" value="Chromosome"/>
</dbReference>
<dbReference type="GO" id="GO:0005737">
    <property type="term" value="C:cytoplasm"/>
    <property type="evidence" value="ECO:0007669"/>
    <property type="project" value="UniProtKB-SubCell"/>
</dbReference>
<dbReference type="GO" id="GO:0005524">
    <property type="term" value="F:ATP binding"/>
    <property type="evidence" value="ECO:0007669"/>
    <property type="project" value="UniProtKB-KW"/>
</dbReference>
<dbReference type="GO" id="GO:0004595">
    <property type="term" value="F:pantetheine-phosphate adenylyltransferase activity"/>
    <property type="evidence" value="ECO:0007669"/>
    <property type="project" value="UniProtKB-UniRule"/>
</dbReference>
<dbReference type="GO" id="GO:0015937">
    <property type="term" value="P:coenzyme A biosynthetic process"/>
    <property type="evidence" value="ECO:0007669"/>
    <property type="project" value="UniProtKB-UniRule"/>
</dbReference>
<dbReference type="CDD" id="cd02163">
    <property type="entry name" value="PPAT"/>
    <property type="match status" value="1"/>
</dbReference>
<dbReference type="Gene3D" id="3.40.50.620">
    <property type="entry name" value="HUPs"/>
    <property type="match status" value="1"/>
</dbReference>
<dbReference type="HAMAP" id="MF_00151">
    <property type="entry name" value="PPAT_bact"/>
    <property type="match status" value="1"/>
</dbReference>
<dbReference type="InterPro" id="IPR004821">
    <property type="entry name" value="Cyt_trans-like"/>
</dbReference>
<dbReference type="InterPro" id="IPR001980">
    <property type="entry name" value="PPAT"/>
</dbReference>
<dbReference type="InterPro" id="IPR014729">
    <property type="entry name" value="Rossmann-like_a/b/a_fold"/>
</dbReference>
<dbReference type="NCBIfam" id="TIGR01510">
    <property type="entry name" value="coaD_prev_kdtB"/>
    <property type="match status" value="1"/>
</dbReference>
<dbReference type="NCBIfam" id="TIGR00125">
    <property type="entry name" value="cyt_tran_rel"/>
    <property type="match status" value="1"/>
</dbReference>
<dbReference type="PANTHER" id="PTHR21342">
    <property type="entry name" value="PHOSPHOPANTETHEINE ADENYLYLTRANSFERASE"/>
    <property type="match status" value="1"/>
</dbReference>
<dbReference type="PANTHER" id="PTHR21342:SF1">
    <property type="entry name" value="PHOSPHOPANTETHEINE ADENYLYLTRANSFERASE"/>
    <property type="match status" value="1"/>
</dbReference>
<dbReference type="Pfam" id="PF01467">
    <property type="entry name" value="CTP_transf_like"/>
    <property type="match status" value="1"/>
</dbReference>
<dbReference type="PRINTS" id="PR01020">
    <property type="entry name" value="LPSBIOSNTHSS"/>
</dbReference>
<dbReference type="SUPFAM" id="SSF52374">
    <property type="entry name" value="Nucleotidylyl transferase"/>
    <property type="match status" value="1"/>
</dbReference>
<reference key="1">
    <citation type="journal article" date="2007" name="PLoS Genet.">
        <title>Patterns and implications of gene gain and loss in the evolution of Prochlorococcus.</title>
        <authorList>
            <person name="Kettler G.C."/>
            <person name="Martiny A.C."/>
            <person name="Huang K."/>
            <person name="Zucker J."/>
            <person name="Coleman M.L."/>
            <person name="Rodrigue S."/>
            <person name="Chen F."/>
            <person name="Lapidus A."/>
            <person name="Ferriera S."/>
            <person name="Johnson J."/>
            <person name="Steglich C."/>
            <person name="Church G.M."/>
            <person name="Richardson P."/>
            <person name="Chisholm S.W."/>
        </authorList>
    </citation>
    <scope>NUCLEOTIDE SEQUENCE [LARGE SCALE GENOMIC DNA]</scope>
    <source>
        <strain>MIT 9303</strain>
    </source>
</reference>
<protein>
    <recommendedName>
        <fullName evidence="1">Phosphopantetheine adenylyltransferase</fullName>
        <ecNumber evidence="1">2.7.7.3</ecNumber>
    </recommendedName>
    <alternativeName>
        <fullName evidence="1">Dephospho-CoA pyrophosphorylase</fullName>
    </alternativeName>
    <alternativeName>
        <fullName evidence="1">Pantetheine-phosphate adenylyltransferase</fullName>
        <shortName evidence="1">PPAT</shortName>
    </alternativeName>
</protein>
<sequence>MRALYPGSFDPLTLGHLDLIERGCALFGEVVVAVLSNPAKTPAFTLQQRFNQIHVATAHCKGVSVISFDGLTVRCARHNQVDLILRGLRAMSDFEYELQIAHTNRSLAPDFETIFLATAAHHSFLSSSMVKEVARFGGNIDHMVPEVVAQDLHRLFN</sequence>
<accession>A2C9T2</accession>
<keyword id="KW-0067">ATP-binding</keyword>
<keyword id="KW-0173">Coenzyme A biosynthesis</keyword>
<keyword id="KW-0963">Cytoplasm</keyword>
<keyword id="KW-0460">Magnesium</keyword>
<keyword id="KW-0547">Nucleotide-binding</keyword>
<keyword id="KW-0548">Nucleotidyltransferase</keyword>
<keyword id="KW-0808">Transferase</keyword>
<evidence type="ECO:0000255" key="1">
    <source>
        <dbReference type="HAMAP-Rule" id="MF_00151"/>
    </source>
</evidence>
<feature type="chain" id="PRO_1000011199" description="Phosphopantetheine adenylyltransferase">
    <location>
        <begin position="1"/>
        <end position="157"/>
    </location>
</feature>
<feature type="binding site" evidence="1">
    <location>
        <begin position="8"/>
        <end position="9"/>
    </location>
    <ligand>
        <name>ATP</name>
        <dbReference type="ChEBI" id="CHEBI:30616"/>
    </ligand>
</feature>
<feature type="binding site" evidence="1">
    <location>
        <position position="8"/>
    </location>
    <ligand>
        <name>substrate</name>
    </ligand>
</feature>
<feature type="binding site" evidence="1">
    <location>
        <position position="16"/>
    </location>
    <ligand>
        <name>ATP</name>
        <dbReference type="ChEBI" id="CHEBI:30616"/>
    </ligand>
</feature>
<feature type="binding site" evidence="1">
    <location>
        <position position="40"/>
    </location>
    <ligand>
        <name>substrate</name>
    </ligand>
</feature>
<feature type="binding site" evidence="1">
    <location>
        <position position="72"/>
    </location>
    <ligand>
        <name>substrate</name>
    </ligand>
</feature>
<feature type="binding site" evidence="1">
    <location>
        <position position="86"/>
    </location>
    <ligand>
        <name>substrate</name>
    </ligand>
</feature>
<feature type="binding site" evidence="1">
    <location>
        <begin position="87"/>
        <end position="89"/>
    </location>
    <ligand>
        <name>ATP</name>
        <dbReference type="ChEBI" id="CHEBI:30616"/>
    </ligand>
</feature>
<feature type="binding site" evidence="1">
    <location>
        <position position="97"/>
    </location>
    <ligand>
        <name>ATP</name>
        <dbReference type="ChEBI" id="CHEBI:30616"/>
    </ligand>
</feature>
<feature type="binding site" evidence="1">
    <location>
        <begin position="122"/>
        <end position="128"/>
    </location>
    <ligand>
        <name>ATP</name>
        <dbReference type="ChEBI" id="CHEBI:30616"/>
    </ligand>
</feature>
<feature type="site" description="Transition state stabilizer" evidence="1">
    <location>
        <position position="16"/>
    </location>
</feature>
<organism>
    <name type="scientific">Prochlorococcus marinus (strain MIT 9303)</name>
    <dbReference type="NCBI Taxonomy" id="59922"/>
    <lineage>
        <taxon>Bacteria</taxon>
        <taxon>Bacillati</taxon>
        <taxon>Cyanobacteriota</taxon>
        <taxon>Cyanophyceae</taxon>
        <taxon>Synechococcales</taxon>
        <taxon>Prochlorococcaceae</taxon>
        <taxon>Prochlorococcus</taxon>
    </lineage>
</organism>
<proteinExistence type="inferred from homology"/>
<comment type="function">
    <text evidence="1">Reversibly transfers an adenylyl group from ATP to 4'-phosphopantetheine, yielding dephospho-CoA (dPCoA) and pyrophosphate.</text>
</comment>
<comment type="catalytic activity">
    <reaction evidence="1">
        <text>(R)-4'-phosphopantetheine + ATP + H(+) = 3'-dephospho-CoA + diphosphate</text>
        <dbReference type="Rhea" id="RHEA:19801"/>
        <dbReference type="ChEBI" id="CHEBI:15378"/>
        <dbReference type="ChEBI" id="CHEBI:30616"/>
        <dbReference type="ChEBI" id="CHEBI:33019"/>
        <dbReference type="ChEBI" id="CHEBI:57328"/>
        <dbReference type="ChEBI" id="CHEBI:61723"/>
        <dbReference type="EC" id="2.7.7.3"/>
    </reaction>
</comment>
<comment type="cofactor">
    <cofactor evidence="1">
        <name>Mg(2+)</name>
        <dbReference type="ChEBI" id="CHEBI:18420"/>
    </cofactor>
</comment>
<comment type="pathway">
    <text evidence="1">Cofactor biosynthesis; coenzyme A biosynthesis; CoA from (R)-pantothenate: step 4/5.</text>
</comment>
<comment type="subunit">
    <text evidence="1">Homohexamer.</text>
</comment>
<comment type="subcellular location">
    <subcellularLocation>
        <location evidence="1">Cytoplasm</location>
    </subcellularLocation>
</comment>
<comment type="similarity">
    <text evidence="1">Belongs to the bacterial CoaD family.</text>
</comment>